<feature type="chain" id="PRO_0000364953" description="Ferredoxin--NADP reductase">
    <location>
        <begin position="1"/>
        <end position="330"/>
    </location>
</feature>
<feature type="binding site" evidence="1">
    <location>
        <position position="35"/>
    </location>
    <ligand>
        <name>FAD</name>
        <dbReference type="ChEBI" id="CHEBI:57692"/>
    </ligand>
</feature>
<feature type="binding site" evidence="1">
    <location>
        <position position="43"/>
    </location>
    <ligand>
        <name>FAD</name>
        <dbReference type="ChEBI" id="CHEBI:57692"/>
    </ligand>
</feature>
<feature type="binding site" evidence="1">
    <location>
        <position position="48"/>
    </location>
    <ligand>
        <name>FAD</name>
        <dbReference type="ChEBI" id="CHEBI:57692"/>
    </ligand>
</feature>
<feature type="binding site" evidence="1">
    <location>
        <position position="90"/>
    </location>
    <ligand>
        <name>FAD</name>
        <dbReference type="ChEBI" id="CHEBI:57692"/>
    </ligand>
</feature>
<feature type="binding site" evidence="1">
    <location>
        <position position="123"/>
    </location>
    <ligand>
        <name>FAD</name>
        <dbReference type="ChEBI" id="CHEBI:57692"/>
    </ligand>
</feature>
<feature type="binding site" evidence="1">
    <location>
        <position position="285"/>
    </location>
    <ligand>
        <name>FAD</name>
        <dbReference type="ChEBI" id="CHEBI:57692"/>
    </ligand>
</feature>
<feature type="binding site" evidence="1">
    <location>
        <position position="326"/>
    </location>
    <ligand>
        <name>FAD</name>
        <dbReference type="ChEBI" id="CHEBI:57692"/>
    </ligand>
</feature>
<keyword id="KW-0274">FAD</keyword>
<keyword id="KW-0285">Flavoprotein</keyword>
<keyword id="KW-0521">NADP</keyword>
<keyword id="KW-0560">Oxidoreductase</keyword>
<dbReference type="EC" id="1.18.1.2" evidence="1"/>
<dbReference type="EMBL" id="CP001129">
    <property type="protein sequence ID" value="ACG62461.1"/>
    <property type="molecule type" value="Genomic_DNA"/>
</dbReference>
<dbReference type="RefSeq" id="WP_012515729.1">
    <property type="nucleotide sequence ID" value="NC_011134.1"/>
</dbReference>
<dbReference type="SMR" id="B4U394"/>
<dbReference type="KEGG" id="sez:Sez_1109"/>
<dbReference type="HOGENOM" id="CLU_031864_5_5_9"/>
<dbReference type="Proteomes" id="UP000001873">
    <property type="component" value="Chromosome"/>
</dbReference>
<dbReference type="GO" id="GO:0004324">
    <property type="term" value="F:ferredoxin-NADP+ reductase activity"/>
    <property type="evidence" value="ECO:0007669"/>
    <property type="project" value="UniProtKB-UniRule"/>
</dbReference>
<dbReference type="GO" id="GO:0050660">
    <property type="term" value="F:flavin adenine dinucleotide binding"/>
    <property type="evidence" value="ECO:0007669"/>
    <property type="project" value="UniProtKB-UniRule"/>
</dbReference>
<dbReference type="GO" id="GO:0050661">
    <property type="term" value="F:NADP binding"/>
    <property type="evidence" value="ECO:0007669"/>
    <property type="project" value="UniProtKB-UniRule"/>
</dbReference>
<dbReference type="Gene3D" id="3.50.50.60">
    <property type="entry name" value="FAD/NAD(P)-binding domain"/>
    <property type="match status" value="2"/>
</dbReference>
<dbReference type="HAMAP" id="MF_01685">
    <property type="entry name" value="FENR2"/>
    <property type="match status" value="1"/>
</dbReference>
<dbReference type="InterPro" id="IPR036188">
    <property type="entry name" value="FAD/NAD-bd_sf"/>
</dbReference>
<dbReference type="InterPro" id="IPR023753">
    <property type="entry name" value="FAD/NAD-binding_dom"/>
</dbReference>
<dbReference type="InterPro" id="IPR022890">
    <property type="entry name" value="Fd--NADP_Rdtase_type_2"/>
</dbReference>
<dbReference type="InterPro" id="IPR050097">
    <property type="entry name" value="Ferredoxin-NADP_redctase_2"/>
</dbReference>
<dbReference type="PANTHER" id="PTHR48105">
    <property type="entry name" value="THIOREDOXIN REDUCTASE 1-RELATED-RELATED"/>
    <property type="match status" value="1"/>
</dbReference>
<dbReference type="Pfam" id="PF07992">
    <property type="entry name" value="Pyr_redox_2"/>
    <property type="match status" value="1"/>
</dbReference>
<dbReference type="PRINTS" id="PR00368">
    <property type="entry name" value="FADPNR"/>
</dbReference>
<dbReference type="PRINTS" id="PR00469">
    <property type="entry name" value="PNDRDTASEII"/>
</dbReference>
<dbReference type="SUPFAM" id="SSF51905">
    <property type="entry name" value="FAD/NAD(P)-binding domain"/>
    <property type="match status" value="1"/>
</dbReference>
<organism>
    <name type="scientific">Streptococcus equi subsp. zooepidemicus (strain MGCS10565)</name>
    <dbReference type="NCBI Taxonomy" id="552526"/>
    <lineage>
        <taxon>Bacteria</taxon>
        <taxon>Bacillati</taxon>
        <taxon>Bacillota</taxon>
        <taxon>Bacilli</taxon>
        <taxon>Lactobacillales</taxon>
        <taxon>Streptococcaceae</taxon>
        <taxon>Streptococcus</taxon>
    </lineage>
</organism>
<reference key="1">
    <citation type="journal article" date="2008" name="PLoS ONE">
        <title>Genome sequence of a lancefield group C Streptococcus zooepidemicus strain causing epidemic nephritis: new information about an old disease.</title>
        <authorList>
            <person name="Beres S.B."/>
            <person name="Sesso R."/>
            <person name="Pinto S.W.L."/>
            <person name="Hoe N.P."/>
            <person name="Porcella S.F."/>
            <person name="Deleo F.R."/>
            <person name="Musser J.M."/>
        </authorList>
    </citation>
    <scope>NUCLEOTIDE SEQUENCE [LARGE SCALE GENOMIC DNA]</scope>
    <source>
        <strain>MGCS10565</strain>
    </source>
</reference>
<protein>
    <recommendedName>
        <fullName evidence="1">Ferredoxin--NADP reductase</fullName>
        <shortName evidence="1">FNR</shortName>
        <shortName evidence="1">Fd-NADP(+) reductase</shortName>
        <ecNumber evidence="1">1.18.1.2</ecNumber>
    </recommendedName>
</protein>
<sequence>MQERTYDITIIGGGPVGLFAAFYAGLRGMTVKIIESLSELGGQPAVLYPEKVIYDIPAYPALTGAELTQKLIEQLSRFDDRIAVCLKEEVLSFEKVDGDFVIQTSKARHYSKAIIVACGNGAFAPRTLGLDNEQLFADHNLFYNVHSLNQFAGKRVVICGGGDSAVDWALALDGLAKSVTLVHRRDAFRAHEHSVELLKNSHVTTLTPFVPLALEGENGFVNKMTIQKVKSEEEITLELDSLIVSFGFSTSNKNLKHWNLDYKRSSLLVSPLFQTSQEGIFAIGDAAAYEGRVDLIATGFGEAPIAVNQAIKYIYPDRDNRPVHSTALID</sequence>
<name>FENR_STREM</name>
<proteinExistence type="inferred from homology"/>
<gene>
    <name type="ordered locus">Sez_1109</name>
</gene>
<accession>B4U394</accession>
<evidence type="ECO:0000255" key="1">
    <source>
        <dbReference type="HAMAP-Rule" id="MF_01685"/>
    </source>
</evidence>
<comment type="catalytic activity">
    <reaction evidence="1">
        <text>2 reduced [2Fe-2S]-[ferredoxin] + NADP(+) + H(+) = 2 oxidized [2Fe-2S]-[ferredoxin] + NADPH</text>
        <dbReference type="Rhea" id="RHEA:20125"/>
        <dbReference type="Rhea" id="RHEA-COMP:10000"/>
        <dbReference type="Rhea" id="RHEA-COMP:10001"/>
        <dbReference type="ChEBI" id="CHEBI:15378"/>
        <dbReference type="ChEBI" id="CHEBI:33737"/>
        <dbReference type="ChEBI" id="CHEBI:33738"/>
        <dbReference type="ChEBI" id="CHEBI:57783"/>
        <dbReference type="ChEBI" id="CHEBI:58349"/>
        <dbReference type="EC" id="1.18.1.2"/>
    </reaction>
</comment>
<comment type="cofactor">
    <cofactor evidence="1">
        <name>FAD</name>
        <dbReference type="ChEBI" id="CHEBI:57692"/>
    </cofactor>
    <text evidence="1">Binds 1 FAD per subunit.</text>
</comment>
<comment type="subunit">
    <text evidence="1">Homodimer.</text>
</comment>
<comment type="similarity">
    <text evidence="1">Belongs to the ferredoxin--NADP reductase type 2 family.</text>
</comment>